<proteinExistence type="inferred from homology"/>
<organism>
    <name type="scientific">Vicia faba</name>
    <name type="common">Broad bean</name>
    <name type="synonym">Faba vulgaris</name>
    <dbReference type="NCBI Taxonomy" id="3906"/>
    <lineage>
        <taxon>Eukaryota</taxon>
        <taxon>Viridiplantae</taxon>
        <taxon>Streptophyta</taxon>
        <taxon>Embryophyta</taxon>
        <taxon>Tracheophyta</taxon>
        <taxon>Spermatophyta</taxon>
        <taxon>Magnoliopsida</taxon>
        <taxon>eudicotyledons</taxon>
        <taxon>Gunneridae</taxon>
        <taxon>Pentapetalae</taxon>
        <taxon>rosids</taxon>
        <taxon>fabids</taxon>
        <taxon>Fabales</taxon>
        <taxon>Fabaceae</taxon>
        <taxon>Papilionoideae</taxon>
        <taxon>50 kb inversion clade</taxon>
        <taxon>NPAAA clade</taxon>
        <taxon>Hologalegina</taxon>
        <taxon>IRL clade</taxon>
        <taxon>Fabeae</taxon>
        <taxon>Vicia</taxon>
    </lineage>
</organism>
<gene>
    <name type="primary">COX3</name>
    <name type="synonym">COXIII</name>
</gene>
<comment type="function">
    <text evidence="1">Component of the cytochrome c oxidase, the last enzyme in the mitochondrial electron transport chain which drives oxidative phosphorylation. The respiratory chain contains 3 multisubunit complexes succinate dehydrogenase (complex II, CII), ubiquinol-cytochrome c oxidoreductase (cytochrome b-c1 complex, complex III, CIII) and cytochrome c oxidase (complex IV, CIV), that cooperate to transfer electrons derived from NADH and succinate to molecular oxygen, creating an electrochemical gradient over the inner membrane that drives transmembrane transport and the ATP synthase. Cytochrome c oxidase is the component of the respiratory chain that catalyzes the reduction of oxygen to water. Electrons originating from reduced cytochrome c in the intermembrane space (IMS) are transferred via the dinuclear copper A center (CU(A)) of subunit 2 and heme A of subunit 1 to the active site in subunit 1, a binuclear center (BNC) formed by heme A3 and copper B (CU(B)). The BNC reduces molecular oxygen to 2 water molecules using 4 electrons from cytochrome c in the IMS and 4 protons from the mitochondrial matrix.</text>
</comment>
<comment type="catalytic activity">
    <reaction evidence="1">
        <text>4 Fe(II)-[cytochrome c] + O2 + 8 H(+)(in) = 4 Fe(III)-[cytochrome c] + 2 H2O + 4 H(+)(out)</text>
        <dbReference type="Rhea" id="RHEA:11436"/>
        <dbReference type="Rhea" id="RHEA-COMP:10350"/>
        <dbReference type="Rhea" id="RHEA-COMP:14399"/>
        <dbReference type="ChEBI" id="CHEBI:15377"/>
        <dbReference type="ChEBI" id="CHEBI:15378"/>
        <dbReference type="ChEBI" id="CHEBI:15379"/>
        <dbReference type="ChEBI" id="CHEBI:29033"/>
        <dbReference type="ChEBI" id="CHEBI:29034"/>
        <dbReference type="EC" id="7.1.1.9"/>
    </reaction>
    <physiologicalReaction direction="left-to-right" evidence="1">
        <dbReference type="Rhea" id="RHEA:11437"/>
    </physiologicalReaction>
</comment>
<comment type="subunit">
    <text evidence="1">Component of the cytochrome c oxidase (complex IV, CIV), a multisubunit enzyme composed of a catalytic core of 3 subunits and several supernumerary subunits. The complex exists as a monomer or a dimer and forms supercomplexes (SCs) in the inner mitochondrial membrane with ubiquinol-cytochrome c oxidoreductase (cytochrome b-c1 complex, complex III, CIII).</text>
</comment>
<comment type="subcellular location">
    <subcellularLocation>
        <location evidence="1">Mitochondrion inner membrane</location>
        <topology evidence="1">Multi-pass membrane protein</topology>
    </subcellularLocation>
</comment>
<comment type="similarity">
    <text evidence="3">Belongs to the cytochrome c oxidase subunit 3 family.</text>
</comment>
<geneLocation type="mitochondrion"/>
<reference key="1">
    <citation type="journal article" date="1990" name="Curr. Genet.">
        <title>A gene for cytochrome c oxidase subunit III (COXIII) in broad bean mitochondrial DNA: structural features and sequence evolution.</title>
        <authorList>
            <person name="Macfarlane J.L."/>
            <person name="Wahleithner J.A."/>
            <person name="Wolstenholme D.R."/>
        </authorList>
    </citation>
    <scope>NUCLEOTIDE SEQUENCE [GENOMIC DNA]</scope>
</reference>
<feature type="chain" id="PRO_0000183870" description="Cytochrome c oxidase subunit 3">
    <location>
        <begin position="1"/>
        <end position="265"/>
    </location>
</feature>
<feature type="transmembrane region" description="Helical" evidence="2">
    <location>
        <begin position="16"/>
        <end position="36"/>
    </location>
</feature>
<feature type="transmembrane region" description="Helical" evidence="2">
    <location>
        <begin position="41"/>
        <end position="61"/>
    </location>
</feature>
<feature type="transmembrane region" description="Helical" evidence="2">
    <location>
        <begin position="81"/>
        <end position="101"/>
    </location>
</feature>
<feature type="transmembrane region" description="Helical" evidence="2">
    <location>
        <begin position="137"/>
        <end position="157"/>
    </location>
</feature>
<feature type="transmembrane region" description="Helical" evidence="2">
    <location>
        <begin position="162"/>
        <end position="182"/>
    </location>
</feature>
<feature type="transmembrane region" description="Helical" evidence="2">
    <location>
        <begin position="200"/>
        <end position="220"/>
    </location>
</feature>
<feature type="transmembrane region" description="Helical" evidence="2">
    <location>
        <begin position="245"/>
        <end position="265"/>
    </location>
</feature>
<protein>
    <recommendedName>
        <fullName>Cytochrome c oxidase subunit 3</fullName>
        <ecNumber>7.1.1.9</ecNumber>
    </recommendedName>
    <alternativeName>
        <fullName>Cytochrome c oxidase polypeptide III</fullName>
    </alternativeName>
</protein>
<name>COX3_VICFA</name>
<accession>Q03227</accession>
<evidence type="ECO:0000250" key="1">
    <source>
        <dbReference type="UniProtKB" id="P00420"/>
    </source>
</evidence>
<evidence type="ECO:0000255" key="2"/>
<evidence type="ECO:0000305" key="3"/>
<sequence>MIESQRHSYHLVDPSPWPISGSLGALATTVGGVMYMHSFQGGATLLSLGLIFILYTMFVWWRDVLRESTLEGHHTKVVQLGPRYGSISFIVSEVMFLFAFFRASSHSSLAPTVEIGGIWPPKGIGVLDPREIPFLNTPILLSSGAAVTWAHHAILAGKEKRAVYALVATVSLALVFTGFQGMEYYQAPFTISDSIYGSTFFLATGFHGFHVIIGTLFLIICGIRQYLGQMTKEHHVGFEAAAWYWHFVDVVRLFPFVSIYWWGGI</sequence>
<keyword id="KW-0472">Membrane</keyword>
<keyword id="KW-0496">Mitochondrion</keyword>
<keyword id="KW-0999">Mitochondrion inner membrane</keyword>
<keyword id="KW-1278">Translocase</keyword>
<keyword id="KW-0812">Transmembrane</keyword>
<keyword id="KW-1133">Transmembrane helix</keyword>
<dbReference type="EC" id="7.1.1.9"/>
<dbReference type="EMBL" id="X51690">
    <property type="protein sequence ID" value="CAA35988.1"/>
    <property type="molecule type" value="Genomic_DNA"/>
</dbReference>
<dbReference type="PIR" id="A48304">
    <property type="entry name" value="A48304"/>
</dbReference>
<dbReference type="SMR" id="Q03227"/>
<dbReference type="EnsemblPlants" id="Vfaba.Hedin2.R1.6g095800.1">
    <property type="protein sequence ID" value="cds:Vfaba.Hedin2.R1.6g095800.1"/>
    <property type="gene ID" value="Vfaba.Hedin2.R1.6g095800"/>
</dbReference>
<dbReference type="Gramene" id="Vfaba.Hedin2.R1.6g095800.1">
    <property type="protein sequence ID" value="cds:Vfaba.Hedin2.R1.6g095800.1"/>
    <property type="gene ID" value="Vfaba.Hedin2.R1.6g095800"/>
</dbReference>
<dbReference type="OrthoDB" id="564124at2759"/>
<dbReference type="GO" id="GO:0005743">
    <property type="term" value="C:mitochondrial inner membrane"/>
    <property type="evidence" value="ECO:0007669"/>
    <property type="project" value="UniProtKB-SubCell"/>
</dbReference>
<dbReference type="GO" id="GO:0004129">
    <property type="term" value="F:cytochrome-c oxidase activity"/>
    <property type="evidence" value="ECO:0007669"/>
    <property type="project" value="UniProtKB-EC"/>
</dbReference>
<dbReference type="GO" id="GO:0006123">
    <property type="term" value="P:mitochondrial electron transport, cytochrome c to oxygen"/>
    <property type="evidence" value="ECO:0007669"/>
    <property type="project" value="TreeGrafter"/>
</dbReference>
<dbReference type="CDD" id="cd01665">
    <property type="entry name" value="Cyt_c_Oxidase_III"/>
    <property type="match status" value="1"/>
</dbReference>
<dbReference type="FunFam" id="1.10.287.70:FF:000075">
    <property type="entry name" value="Cytochrome c oxidase subunit 3"/>
    <property type="match status" value="1"/>
</dbReference>
<dbReference type="FunFam" id="1.20.120.80:FF:000002">
    <property type="entry name" value="Cytochrome c oxidase subunit 3"/>
    <property type="match status" value="1"/>
</dbReference>
<dbReference type="Gene3D" id="1.10.287.70">
    <property type="match status" value="1"/>
</dbReference>
<dbReference type="Gene3D" id="1.20.120.80">
    <property type="entry name" value="Cytochrome c oxidase, subunit III, four-helix bundle"/>
    <property type="match status" value="1"/>
</dbReference>
<dbReference type="InterPro" id="IPR024791">
    <property type="entry name" value="Cyt_c/ubiquinol_Oxase_su3"/>
</dbReference>
<dbReference type="InterPro" id="IPR033945">
    <property type="entry name" value="Cyt_c_oxase_su3_dom"/>
</dbReference>
<dbReference type="InterPro" id="IPR000298">
    <property type="entry name" value="Cyt_c_oxidase-like_su3"/>
</dbReference>
<dbReference type="InterPro" id="IPR035973">
    <property type="entry name" value="Cyt_c_oxidase_su3-like_sf"/>
</dbReference>
<dbReference type="InterPro" id="IPR013833">
    <property type="entry name" value="Cyt_c_oxidase_su3_a-hlx"/>
</dbReference>
<dbReference type="PANTHER" id="PTHR11403:SF7">
    <property type="entry name" value="CYTOCHROME C OXIDASE SUBUNIT 3"/>
    <property type="match status" value="1"/>
</dbReference>
<dbReference type="PANTHER" id="PTHR11403">
    <property type="entry name" value="CYTOCHROME C OXIDASE SUBUNIT III"/>
    <property type="match status" value="1"/>
</dbReference>
<dbReference type="Pfam" id="PF00510">
    <property type="entry name" value="COX3"/>
    <property type="match status" value="1"/>
</dbReference>
<dbReference type="SUPFAM" id="SSF81452">
    <property type="entry name" value="Cytochrome c oxidase subunit III-like"/>
    <property type="match status" value="1"/>
</dbReference>
<dbReference type="PROSITE" id="PS50253">
    <property type="entry name" value="COX3"/>
    <property type="match status" value="1"/>
</dbReference>